<keyword id="KW-0963">Cytoplasm</keyword>
<keyword id="KW-0269">Exonuclease</keyword>
<keyword id="KW-0378">Hydrolase</keyword>
<keyword id="KW-0460">Magnesium</keyword>
<keyword id="KW-0479">Metal-binding</keyword>
<keyword id="KW-0540">Nuclease</keyword>
<keyword id="KW-1185">Reference proteome</keyword>
<name>TATD_ERWT9</name>
<protein>
    <recommendedName>
        <fullName evidence="1">3'-5' ssDNA/RNA exonuclease TatD</fullName>
        <ecNumber evidence="1">3.1.11.-</ecNumber>
        <ecNumber evidence="1">3.1.13.-</ecNumber>
    </recommendedName>
    <alternativeName>
        <fullName evidence="1">DNase TatD</fullName>
    </alternativeName>
</protein>
<proteinExistence type="inferred from homology"/>
<organism>
    <name type="scientific">Erwinia tasmaniensis (strain DSM 17950 / CFBP 7177 / CIP 109463 / NCPPB 4357 / Et1/99)</name>
    <dbReference type="NCBI Taxonomy" id="465817"/>
    <lineage>
        <taxon>Bacteria</taxon>
        <taxon>Pseudomonadati</taxon>
        <taxon>Pseudomonadota</taxon>
        <taxon>Gammaproteobacteria</taxon>
        <taxon>Enterobacterales</taxon>
        <taxon>Erwiniaceae</taxon>
        <taxon>Erwinia</taxon>
    </lineage>
</organism>
<gene>
    <name evidence="1" type="primary">tatD</name>
    <name type="ordered locus">ETA_02410</name>
</gene>
<evidence type="ECO:0000255" key="1">
    <source>
        <dbReference type="HAMAP-Rule" id="MF_00901"/>
    </source>
</evidence>
<dbReference type="EC" id="3.1.11.-" evidence="1"/>
<dbReference type="EC" id="3.1.13.-" evidence="1"/>
<dbReference type="EMBL" id="CU468135">
    <property type="protein sequence ID" value="CAO95287.1"/>
    <property type="molecule type" value="Genomic_DNA"/>
</dbReference>
<dbReference type="RefSeq" id="WP_012440007.1">
    <property type="nucleotide sequence ID" value="NC_010694.1"/>
</dbReference>
<dbReference type="SMR" id="B2VG45"/>
<dbReference type="STRING" id="465817.ETA_02410"/>
<dbReference type="KEGG" id="eta:ETA_02410"/>
<dbReference type="eggNOG" id="COG0084">
    <property type="taxonomic scope" value="Bacteria"/>
</dbReference>
<dbReference type="HOGENOM" id="CLU_031506_1_2_6"/>
<dbReference type="OrthoDB" id="9810005at2"/>
<dbReference type="Proteomes" id="UP000001726">
    <property type="component" value="Chromosome"/>
</dbReference>
<dbReference type="GO" id="GO:0005737">
    <property type="term" value="C:cytoplasm"/>
    <property type="evidence" value="ECO:0007669"/>
    <property type="project" value="UniProtKB-SubCell"/>
</dbReference>
<dbReference type="GO" id="GO:0000175">
    <property type="term" value="F:3'-5'-RNA exonuclease activity"/>
    <property type="evidence" value="ECO:0007669"/>
    <property type="project" value="UniProtKB-UniRule"/>
</dbReference>
<dbReference type="GO" id="GO:0000287">
    <property type="term" value="F:magnesium ion binding"/>
    <property type="evidence" value="ECO:0007669"/>
    <property type="project" value="UniProtKB-UniRule"/>
</dbReference>
<dbReference type="GO" id="GO:0008310">
    <property type="term" value="F:single-stranded DNA 3'-5' DNA exonuclease activity"/>
    <property type="evidence" value="ECO:0007669"/>
    <property type="project" value="UniProtKB-UniRule"/>
</dbReference>
<dbReference type="CDD" id="cd01310">
    <property type="entry name" value="TatD_DNAse"/>
    <property type="match status" value="1"/>
</dbReference>
<dbReference type="FunFam" id="3.20.20.140:FF:000018">
    <property type="entry name" value="3'-5' ssDNA/RNA exonuclease TatD"/>
    <property type="match status" value="1"/>
</dbReference>
<dbReference type="Gene3D" id="3.20.20.140">
    <property type="entry name" value="Metal-dependent hydrolases"/>
    <property type="match status" value="1"/>
</dbReference>
<dbReference type="HAMAP" id="MF_00901">
    <property type="entry name" value="TatD_exonuclease"/>
    <property type="match status" value="1"/>
</dbReference>
<dbReference type="InterPro" id="IPR018228">
    <property type="entry name" value="DNase_TatD-rel_CS"/>
</dbReference>
<dbReference type="InterPro" id="IPR024918">
    <property type="entry name" value="Exonuc_TatD"/>
</dbReference>
<dbReference type="InterPro" id="IPR032466">
    <property type="entry name" value="Metal_Hydrolase"/>
</dbReference>
<dbReference type="InterPro" id="IPR001130">
    <property type="entry name" value="TatD-like"/>
</dbReference>
<dbReference type="InterPro" id="IPR050891">
    <property type="entry name" value="TatD-type_Hydrolase"/>
</dbReference>
<dbReference type="NCBIfam" id="NF007745">
    <property type="entry name" value="PRK10425.1"/>
    <property type="match status" value="1"/>
</dbReference>
<dbReference type="PANTHER" id="PTHR10060:SF15">
    <property type="entry name" value="DEOXYRIBONUCLEASE TATDN1"/>
    <property type="match status" value="1"/>
</dbReference>
<dbReference type="PANTHER" id="PTHR10060">
    <property type="entry name" value="TATD FAMILY DEOXYRIBONUCLEASE"/>
    <property type="match status" value="1"/>
</dbReference>
<dbReference type="Pfam" id="PF01026">
    <property type="entry name" value="TatD_DNase"/>
    <property type="match status" value="1"/>
</dbReference>
<dbReference type="PIRSF" id="PIRSF005902">
    <property type="entry name" value="DNase_TatD"/>
    <property type="match status" value="1"/>
</dbReference>
<dbReference type="SUPFAM" id="SSF51556">
    <property type="entry name" value="Metallo-dependent hydrolases"/>
    <property type="match status" value="1"/>
</dbReference>
<dbReference type="PROSITE" id="PS01090">
    <property type="entry name" value="TATD_2"/>
    <property type="match status" value="1"/>
</dbReference>
<accession>B2VG45</accession>
<sequence length="259" mass="28941">MFDIGVNLTSTQFAKDRDKVIKRAREAGVSGMLITGTNALESQQALSLARQHPDYCWSTAGVHPHHASEWSGETAATLRRLAESPQMVAIGECGLDFNRNFSDPEQQAYAFNAQLALAAELSLPVFLHCREAHERFISILKPWLPKLKAAVLHCFTGTRPELESCLAEGLFIGITGWICDERRGQELRELMPLIPADRLLLETDAPWLLPRDMRPRPPSRRNEPCFLPHIVQQVALLRGDDAGELAAQTALNARRLFNL</sequence>
<feature type="chain" id="PRO_0000412742" description="3'-5' ssDNA/RNA exonuclease TatD">
    <location>
        <begin position="1"/>
        <end position="259"/>
    </location>
</feature>
<feature type="binding site" evidence="1">
    <location>
        <position position="92"/>
    </location>
    <ligand>
        <name>a divalent metal cation</name>
        <dbReference type="ChEBI" id="CHEBI:60240"/>
    </ligand>
</feature>
<feature type="binding site" evidence="1">
    <location>
        <position position="128"/>
    </location>
    <ligand>
        <name>a divalent metal cation</name>
        <dbReference type="ChEBI" id="CHEBI:60240"/>
    </ligand>
</feature>
<feature type="binding site" evidence="1">
    <location>
        <position position="153"/>
    </location>
    <ligand>
        <name>a divalent metal cation</name>
        <dbReference type="ChEBI" id="CHEBI:60240"/>
    </ligand>
</feature>
<comment type="function">
    <text evidence="1">3'-5' exonuclease that prefers single-stranded DNA and RNA. May play a role in the H(2)O(2)-induced DNA damage repair.</text>
</comment>
<comment type="cofactor">
    <cofactor evidence="1">
        <name>Mg(2+)</name>
        <dbReference type="ChEBI" id="CHEBI:18420"/>
    </cofactor>
</comment>
<comment type="subunit">
    <text evidence="1">Monomer.</text>
</comment>
<comment type="subcellular location">
    <subcellularLocation>
        <location evidence="1">Cytoplasm</location>
    </subcellularLocation>
</comment>
<comment type="similarity">
    <text evidence="1">Belongs to the metallo-dependent hydrolases superfamily. TatD-type hydrolase family. TatD subfamily.</text>
</comment>
<reference key="1">
    <citation type="journal article" date="2008" name="Environ. Microbiol.">
        <title>The genome of Erwinia tasmaniensis strain Et1/99, a non-pathogenic bacterium in the genus Erwinia.</title>
        <authorList>
            <person name="Kube M."/>
            <person name="Migdoll A.M."/>
            <person name="Mueller I."/>
            <person name="Kuhl H."/>
            <person name="Beck A."/>
            <person name="Reinhardt R."/>
            <person name="Geider K."/>
        </authorList>
    </citation>
    <scope>NUCLEOTIDE SEQUENCE [LARGE SCALE GENOMIC DNA]</scope>
    <source>
        <strain>DSM 17950 / CFBP 7177 / CIP 109463 / NCPPB 4357 / Et1/99</strain>
    </source>
</reference>